<name>EXUT_DICCH</name>
<organism>
    <name type="scientific">Dickeya chrysanthemi</name>
    <name type="common">Pectobacterium chrysanthemi</name>
    <name type="synonym">Erwinia chrysanthemi</name>
    <dbReference type="NCBI Taxonomy" id="556"/>
    <lineage>
        <taxon>Bacteria</taxon>
        <taxon>Pseudomonadati</taxon>
        <taxon>Pseudomonadota</taxon>
        <taxon>Gammaproteobacteria</taxon>
        <taxon>Enterobacterales</taxon>
        <taxon>Pectobacteriaceae</taxon>
        <taxon>Dickeya</taxon>
    </lineage>
</organism>
<reference key="1">
    <citation type="journal article" date="1994" name="FEMS Microbiol. Lett.">
        <title>Cloning of a galacturonic acid uptake gene from Erwinia chrysanthemi EC16.</title>
        <authorList>
            <person name="San Francisco M.J."/>
            <person name="Freeman T.L."/>
        </authorList>
    </citation>
    <scope>NUCLEOTIDE SEQUENCE [GENOMIC DNA]</scope>
    <scope>FUNCTION</scope>
    <scope>INDUCTION</scope>
    <source>
        <strain>EC16</strain>
    </source>
</reference>
<reference key="2">
    <citation type="journal article" date="1998" name="Mol. Plant Microbe Interact.">
        <title>The exuT gene of Erwinia chrysanthemi EC16: nucleotide sequence, expression, localization, and relevance of the gene product.</title>
        <authorList>
            <person name="Haseloff B.J."/>
            <person name="Freeman T.L."/>
            <person name="Valmeekam V."/>
            <person name="Melkus M.W."/>
            <person name="Oner F."/>
            <person name="Valachovic M.S."/>
            <person name="San Francisco M.J."/>
        </authorList>
    </citation>
    <scope>NUCLEOTIDE SEQUENCE [GENOMIC DNA]</scope>
    <scope>SUBCELLULAR LOCATION</scope>
    <scope>INDUCTION</scope>
    <scope>DISRUPTION PHENOTYPE</scope>
    <source>
        <strain>EC16</strain>
    </source>
</reference>
<reference key="3">
    <citation type="journal article" date="1993" name="J. Bacteriol.">
        <title>Uptake of galacturonic acid in Erwinia chrysanthemi EC16.</title>
        <authorList>
            <person name="San Francisco M.J."/>
            <person name="Keenan R.W."/>
        </authorList>
    </citation>
    <scope>FUNCTION</scope>
    <scope>ACTIVITY REGULATION</scope>
    <source>
        <strain>EC16</strain>
    </source>
</reference>
<reference key="4">
    <citation type="journal article" date="2001" name="Mol. Plant Microbe Interact.">
        <title>Control of exuT activity for galacturonate transport by the negative regulator ExuR in Erwinia chrysanthemi EC16.</title>
        <authorList>
            <person name="Valmeekam V."/>
            <person name="Loh Y.L."/>
            <person name="San Francisco M.J."/>
        </authorList>
    </citation>
    <scope>INDUCTION</scope>
</reference>
<comment type="function">
    <text evidence="3 5">Transport of D-galacturonate (PubMed:8320243, Ref.1). Cannot transport the dimer digalacturonic acid (PubMed:8320243). Uptake is an active process (PubMed:8320243).</text>
</comment>
<comment type="catalytic activity">
    <reaction evidence="8">
        <text>aldehydo-D-galacturonate(out) + H(+)(out) = aldehydo-D-galacturonate(in) + H(+)(in)</text>
        <dbReference type="Rhea" id="RHEA:29295"/>
        <dbReference type="ChEBI" id="CHEBI:12952"/>
        <dbReference type="ChEBI" id="CHEBI:15378"/>
    </reaction>
</comment>
<comment type="activity regulation">
    <text evidence="3">Inhibited by cyanide and 2,4-dinitrophenol, but not by arsenate.</text>
</comment>
<comment type="subcellular location">
    <subcellularLocation>
        <location evidence="4">Cell inner membrane</location>
        <topology evidence="1">Multi-pass membrane protein</topology>
    </subcellularLocation>
</comment>
<comment type="induction">
    <text evidence="2 4 5">Induced in the presence of D-galacturonate (PubMed:11386378, PubMed:9530868, Ref.1). Expression is regulated by ExuR (PubMed:11386378). Maximal transcription activity is observed within 8 hours of bacterial inoculation into potato tubers, well before any visible symptoms of disease are detected (PubMed:11386378).</text>
</comment>
<comment type="disruption phenotype">
    <text evidence="4">Mutation of the gene causes a reduction in growth on D-galacturonate and maceration of potato tuber tissue.</text>
</comment>
<comment type="similarity">
    <text evidence="7">Belongs to the major facilitator superfamily. Phthalate permease family.</text>
</comment>
<accession>P94774</accession>
<proteinExistence type="evidence at transcript level"/>
<feature type="signal peptide" evidence="1">
    <location>
        <begin position="1"/>
        <end position="32"/>
    </location>
</feature>
<feature type="chain" id="PRO_0000456285" description="Galacturonate transporter">
    <location>
        <begin position="33"/>
        <end position="345"/>
    </location>
</feature>
<feature type="transmembrane region" description="Helical" evidence="1">
    <location>
        <begin position="49"/>
        <end position="69"/>
    </location>
</feature>
<feature type="transmembrane region" description="Helical" evidence="1">
    <location>
        <begin position="76"/>
        <end position="96"/>
    </location>
</feature>
<feature type="transmembrane region" description="Helical" evidence="1">
    <location>
        <begin position="100"/>
        <end position="120"/>
    </location>
</feature>
<feature type="transmembrane region" description="Helical" evidence="1">
    <location>
        <begin position="139"/>
        <end position="159"/>
    </location>
</feature>
<feature type="transmembrane region" description="Helical" evidence="1">
    <location>
        <begin position="165"/>
        <end position="185"/>
    </location>
</feature>
<feature type="transmembrane region" description="Helical" evidence="1">
    <location>
        <begin position="237"/>
        <end position="257"/>
    </location>
</feature>
<feature type="transmembrane region" description="Helical" evidence="1">
    <location>
        <begin position="265"/>
        <end position="285"/>
    </location>
</feature>
<feature type="transmembrane region" description="Helical" evidence="1">
    <location>
        <begin position="304"/>
        <end position="324"/>
    </location>
</feature>
<protein>
    <recommendedName>
        <fullName evidence="7">Galacturonate transporter</fullName>
    </recommendedName>
</protein>
<gene>
    <name evidence="6" type="primary">exuT</name>
</gene>
<evidence type="ECO:0000255" key="1"/>
<evidence type="ECO:0000269" key="2">
    <source>
    </source>
</evidence>
<evidence type="ECO:0000269" key="3">
    <source>
    </source>
</evidence>
<evidence type="ECO:0000269" key="4">
    <source>
    </source>
</evidence>
<evidence type="ECO:0000269" key="5">
    <source ref="1"/>
</evidence>
<evidence type="ECO:0000303" key="6">
    <source>
    </source>
</evidence>
<evidence type="ECO:0000305" key="7"/>
<evidence type="ECO:0000305" key="8">
    <source>
    </source>
</evidence>
<dbReference type="EMBL" id="U86689">
    <property type="protein sequence ID" value="AAB70881.1"/>
    <property type="molecule type" value="Genomic_DNA"/>
</dbReference>
<dbReference type="SMR" id="P94774"/>
<dbReference type="TCDB" id="2.A.1.14.41">
    <property type="family name" value="the major facilitator superfamily (mfs)"/>
</dbReference>
<dbReference type="GO" id="GO:0005886">
    <property type="term" value="C:plasma membrane"/>
    <property type="evidence" value="ECO:0007669"/>
    <property type="project" value="UniProtKB-SubCell"/>
</dbReference>
<dbReference type="GO" id="GO:0015134">
    <property type="term" value="F:hexuronate transmembrane transporter activity"/>
    <property type="evidence" value="ECO:0007669"/>
    <property type="project" value="TreeGrafter"/>
</dbReference>
<dbReference type="CDD" id="cd17319">
    <property type="entry name" value="MFS_ExuT_GudP_like"/>
    <property type="match status" value="1"/>
</dbReference>
<dbReference type="FunFam" id="1.20.1250.20:FF:000036">
    <property type="entry name" value="Hexuronate transporter"/>
    <property type="match status" value="1"/>
</dbReference>
<dbReference type="Gene3D" id="1.20.1250.20">
    <property type="entry name" value="MFS general substrate transporter like domains"/>
    <property type="match status" value="2"/>
</dbReference>
<dbReference type="InterPro" id="IPR011701">
    <property type="entry name" value="MFS"/>
</dbReference>
<dbReference type="InterPro" id="IPR020846">
    <property type="entry name" value="MFS_dom"/>
</dbReference>
<dbReference type="InterPro" id="IPR050382">
    <property type="entry name" value="MFS_Na/Anion_cotransporter"/>
</dbReference>
<dbReference type="InterPro" id="IPR036259">
    <property type="entry name" value="MFS_trans_sf"/>
</dbReference>
<dbReference type="PANTHER" id="PTHR11662:SF285">
    <property type="entry name" value="HEXURONATE TRANSPORTER"/>
    <property type="match status" value="1"/>
</dbReference>
<dbReference type="PANTHER" id="PTHR11662">
    <property type="entry name" value="SOLUTE CARRIER FAMILY 17"/>
    <property type="match status" value="1"/>
</dbReference>
<dbReference type="Pfam" id="PF07690">
    <property type="entry name" value="MFS_1"/>
    <property type="match status" value="1"/>
</dbReference>
<dbReference type="SUPFAM" id="SSF103473">
    <property type="entry name" value="MFS general substrate transporter"/>
    <property type="match status" value="1"/>
</dbReference>
<dbReference type="PROSITE" id="PS50850">
    <property type="entry name" value="MFS"/>
    <property type="match status" value="1"/>
</dbReference>
<keyword id="KW-0997">Cell inner membrane</keyword>
<keyword id="KW-1003">Cell membrane</keyword>
<keyword id="KW-0472">Membrane</keyword>
<keyword id="KW-0732">Signal</keyword>
<keyword id="KW-0812">Transmembrane</keyword>
<keyword id="KW-1133">Transmembrane helix</keyword>
<keyword id="KW-0813">Transport</keyword>
<sequence length="345" mass="37870">MFKIKGLRWYMIGLVTIGTVLGYLTRNAIAAAAPTLQEQLHISTQQYSYIIAAYSACYTIMQPVAGYVLDVLGTKVGYAMFAILWALFCAGTALANSWGGLAVARGAVGMAEAAMIPAGLKASSEWFPAKERSVAVGYFNVGSSIGGMLAPPLVVWAIMAHSWQMAFLITGALSLVWALCWLYFYKHPKDQKKLSTEEREYILSGQEAQHQAGNAKRMSAWQILRNRQFWGIALPRFLAEPAWGTFNAWIPLFMFKAYGFNLKEIAMFAWMPMLFADLGCILGGYMPMLFQKYFKVNLIVSRKLVVTLGALLMIGPGTIGLFTSPYVAIACCASAALPTSPCPVR</sequence>